<dbReference type="EMBL" id="BA000003">
    <property type="protein sequence ID" value="BAB12901.1"/>
    <property type="molecule type" value="Genomic_DNA"/>
</dbReference>
<dbReference type="RefSeq" id="NP_240015.1">
    <property type="nucleotide sequence ID" value="NC_002528.1"/>
</dbReference>
<dbReference type="SMR" id="P57281"/>
<dbReference type="STRING" id="563178.BUAP5A_181"/>
<dbReference type="EnsemblBacteria" id="BAB12901">
    <property type="protein sequence ID" value="BAB12901"/>
    <property type="gene ID" value="BAB12901"/>
</dbReference>
<dbReference type="KEGG" id="buc:BU184"/>
<dbReference type="PATRIC" id="fig|107806.10.peg.195"/>
<dbReference type="eggNOG" id="COG0576">
    <property type="taxonomic scope" value="Bacteria"/>
</dbReference>
<dbReference type="HOGENOM" id="CLU_057217_6_0_6"/>
<dbReference type="Proteomes" id="UP000001806">
    <property type="component" value="Chromosome"/>
</dbReference>
<dbReference type="GO" id="GO:0005829">
    <property type="term" value="C:cytosol"/>
    <property type="evidence" value="ECO:0007669"/>
    <property type="project" value="TreeGrafter"/>
</dbReference>
<dbReference type="GO" id="GO:0000774">
    <property type="term" value="F:adenyl-nucleotide exchange factor activity"/>
    <property type="evidence" value="ECO:0007669"/>
    <property type="project" value="InterPro"/>
</dbReference>
<dbReference type="GO" id="GO:0042803">
    <property type="term" value="F:protein homodimerization activity"/>
    <property type="evidence" value="ECO:0007669"/>
    <property type="project" value="InterPro"/>
</dbReference>
<dbReference type="GO" id="GO:0051087">
    <property type="term" value="F:protein-folding chaperone binding"/>
    <property type="evidence" value="ECO:0007669"/>
    <property type="project" value="InterPro"/>
</dbReference>
<dbReference type="GO" id="GO:0051082">
    <property type="term" value="F:unfolded protein binding"/>
    <property type="evidence" value="ECO:0007669"/>
    <property type="project" value="TreeGrafter"/>
</dbReference>
<dbReference type="GO" id="GO:0006457">
    <property type="term" value="P:protein folding"/>
    <property type="evidence" value="ECO:0007669"/>
    <property type="project" value="InterPro"/>
</dbReference>
<dbReference type="CDD" id="cd00446">
    <property type="entry name" value="GrpE"/>
    <property type="match status" value="1"/>
</dbReference>
<dbReference type="Gene3D" id="3.90.20.20">
    <property type="match status" value="1"/>
</dbReference>
<dbReference type="Gene3D" id="2.30.22.10">
    <property type="entry name" value="Head domain of nucleotide exchange factor GrpE"/>
    <property type="match status" value="1"/>
</dbReference>
<dbReference type="HAMAP" id="MF_01151">
    <property type="entry name" value="GrpE"/>
    <property type="match status" value="1"/>
</dbReference>
<dbReference type="InterPro" id="IPR000740">
    <property type="entry name" value="GrpE"/>
</dbReference>
<dbReference type="InterPro" id="IPR013805">
    <property type="entry name" value="GrpE_coiled_coil"/>
</dbReference>
<dbReference type="InterPro" id="IPR009012">
    <property type="entry name" value="GrpE_head"/>
</dbReference>
<dbReference type="PANTHER" id="PTHR21237">
    <property type="entry name" value="GRPE PROTEIN"/>
    <property type="match status" value="1"/>
</dbReference>
<dbReference type="PANTHER" id="PTHR21237:SF23">
    <property type="entry name" value="GRPE PROTEIN HOMOLOG, MITOCHONDRIAL"/>
    <property type="match status" value="1"/>
</dbReference>
<dbReference type="Pfam" id="PF01025">
    <property type="entry name" value="GrpE"/>
    <property type="match status" value="1"/>
</dbReference>
<dbReference type="PRINTS" id="PR00773">
    <property type="entry name" value="GRPEPROTEIN"/>
</dbReference>
<dbReference type="SUPFAM" id="SSF58014">
    <property type="entry name" value="Coiled-coil domain of nucleotide exchange factor GrpE"/>
    <property type="match status" value="1"/>
</dbReference>
<dbReference type="SUPFAM" id="SSF51064">
    <property type="entry name" value="Head domain of nucleotide exchange factor GrpE"/>
    <property type="match status" value="1"/>
</dbReference>
<dbReference type="PROSITE" id="PS01071">
    <property type="entry name" value="GRPE"/>
    <property type="match status" value="1"/>
</dbReference>
<reference key="1">
    <citation type="journal article" date="2000" name="Nature">
        <title>Genome sequence of the endocellular bacterial symbiont of aphids Buchnera sp. APS.</title>
        <authorList>
            <person name="Shigenobu S."/>
            <person name="Watanabe H."/>
            <person name="Hattori M."/>
            <person name="Sakaki Y."/>
            <person name="Ishikawa H."/>
        </authorList>
    </citation>
    <scope>NUCLEOTIDE SEQUENCE [LARGE SCALE GENOMIC DNA]</scope>
    <source>
        <strain>APS</strain>
    </source>
</reference>
<proteinExistence type="inferred from homology"/>
<feature type="chain" id="PRO_0000113760" description="Protein GrpE 2">
    <location>
        <begin position="1"/>
        <end position="188"/>
    </location>
</feature>
<accession>P57281</accession>
<name>GRPE2_BUCAI</name>
<comment type="function">
    <text evidence="1">Participates actively in the response to hyperosmotic and heat shock by preventing the aggregation of stress-denatured proteins, in association with DnaK and GrpE. It is the nucleotide exchange factor for DnaK and may function as a thermosensor. Unfolded proteins bind initially to DnaJ; upon interaction with the DnaJ-bound protein, DnaK hydrolyzes its bound ATP, resulting in the formation of a stable complex. GrpE releases ADP from DnaK; ATP binding to DnaK triggers the release of the substrate protein, thus completing the reaction cycle. Several rounds of ATP-dependent interactions between DnaJ, DnaK and GrpE are required for fully efficient folding.</text>
</comment>
<comment type="subunit">
    <text evidence="1">Homodimer.</text>
</comment>
<comment type="subcellular location">
    <subcellularLocation>
        <location evidence="1">Cytoplasm</location>
    </subcellularLocation>
</comment>
<comment type="similarity">
    <text evidence="1">Belongs to the GrpE family.</text>
</comment>
<gene>
    <name evidence="1" type="primary">grpE2</name>
    <name type="ordered locus">BU184</name>
</gene>
<evidence type="ECO:0000255" key="1">
    <source>
        <dbReference type="HAMAP-Rule" id="MF_01151"/>
    </source>
</evidence>
<keyword id="KW-0143">Chaperone</keyword>
<keyword id="KW-0963">Cytoplasm</keyword>
<keyword id="KW-1185">Reference proteome</keyword>
<keyword id="KW-0346">Stress response</keyword>
<protein>
    <recommendedName>
        <fullName evidence="1">Protein GrpE 2</fullName>
    </recommendedName>
    <alternativeName>
        <fullName evidence="1">HSP-70 cofactor 2</fullName>
    </alternativeName>
</protein>
<sequence length="188" mass="21726">MDNKENKLDEKKIFKNNKIEEKKENLIDAITVQNQKIENLKLKLLQNQKKINDIELRKLANIENIKKNTEEKIEKIKKTEIERFLKSIIPVIDSLEDILNLSTTVDIKDQPIIKGIELTLESLLNILNKLGVKIEGQKNKVFNPDIHELVSRELSKETLPNHVISVNKKGFTFNKIVLRKASVIVAEN</sequence>
<organism>
    <name type="scientific">Buchnera aphidicola subsp. Acyrthosiphon pisum (strain APS)</name>
    <name type="common">Acyrthosiphon pisum symbiotic bacterium</name>
    <dbReference type="NCBI Taxonomy" id="107806"/>
    <lineage>
        <taxon>Bacteria</taxon>
        <taxon>Pseudomonadati</taxon>
        <taxon>Pseudomonadota</taxon>
        <taxon>Gammaproteobacteria</taxon>
        <taxon>Enterobacterales</taxon>
        <taxon>Erwiniaceae</taxon>
        <taxon>Buchnera</taxon>
    </lineage>
</organism>